<protein>
    <recommendedName>
        <fullName>UPF0715 membrane protein YwlA</fullName>
    </recommendedName>
</protein>
<comment type="subcellular location">
    <subcellularLocation>
        <location evidence="2">Cell membrane</location>
        <topology evidence="2">Multi-pass membrane protein</topology>
    </subcellularLocation>
</comment>
<comment type="similarity">
    <text evidence="2">Belongs to the UPF0715 family.</text>
</comment>
<accession>P39150</accession>
<dbReference type="EMBL" id="Z38002">
    <property type="protein sequence ID" value="CAA86102.1"/>
    <property type="molecule type" value="Genomic_DNA"/>
</dbReference>
<dbReference type="EMBL" id="AL009126">
    <property type="protein sequence ID" value="CAB15715.1"/>
    <property type="molecule type" value="Genomic_DNA"/>
</dbReference>
<dbReference type="PIR" id="I40473">
    <property type="entry name" value="I40473"/>
</dbReference>
<dbReference type="RefSeq" id="NP_391579.1">
    <property type="nucleotide sequence ID" value="NC_000964.3"/>
</dbReference>
<dbReference type="RefSeq" id="WP_003227651.1">
    <property type="nucleotide sequence ID" value="NZ_OZ025638.1"/>
</dbReference>
<dbReference type="FunCoup" id="P39150">
    <property type="interactions" value="151"/>
</dbReference>
<dbReference type="STRING" id="224308.BSU36980"/>
<dbReference type="PaxDb" id="224308-BSU36980"/>
<dbReference type="DNASU" id="938509"/>
<dbReference type="EnsemblBacteria" id="CAB15715">
    <property type="protein sequence ID" value="CAB15715"/>
    <property type="gene ID" value="BSU_36980"/>
</dbReference>
<dbReference type="GeneID" id="938509"/>
<dbReference type="KEGG" id="bsu:BSU36980"/>
<dbReference type="PATRIC" id="fig|224308.179.peg.4005"/>
<dbReference type="eggNOG" id="ENOG5031U9Q">
    <property type="taxonomic scope" value="Bacteria"/>
</dbReference>
<dbReference type="InParanoid" id="P39150"/>
<dbReference type="OrthoDB" id="2914193at2"/>
<dbReference type="PhylomeDB" id="P39150"/>
<dbReference type="BioCyc" id="BSUB:BSU36980-MONOMER"/>
<dbReference type="Proteomes" id="UP000001570">
    <property type="component" value="Chromosome"/>
</dbReference>
<dbReference type="GO" id="GO:0005886">
    <property type="term" value="C:plasma membrane"/>
    <property type="evidence" value="ECO:0007669"/>
    <property type="project" value="UniProtKB-SubCell"/>
</dbReference>
<dbReference type="InterPro" id="IPR031374">
    <property type="entry name" value="UPF0715"/>
</dbReference>
<dbReference type="Pfam" id="PF17094">
    <property type="entry name" value="UPF0715"/>
    <property type="match status" value="1"/>
</dbReference>
<keyword id="KW-1003">Cell membrane</keyword>
<keyword id="KW-0472">Membrane</keyword>
<keyword id="KW-1185">Reference proteome</keyword>
<keyword id="KW-0812">Transmembrane</keyword>
<keyword id="KW-1133">Transmembrane helix</keyword>
<evidence type="ECO:0000255" key="1"/>
<evidence type="ECO:0000305" key="2"/>
<proteinExistence type="inferred from homology"/>
<feature type="chain" id="PRO_0000049982" description="UPF0715 membrane protein YwlA">
    <location>
        <begin position="1"/>
        <end position="120"/>
    </location>
</feature>
<feature type="transmembrane region" description="Helical" evidence="1">
    <location>
        <begin position="3"/>
        <end position="23"/>
    </location>
</feature>
<feature type="transmembrane region" description="Helical" evidence="1">
    <location>
        <begin position="26"/>
        <end position="46"/>
    </location>
</feature>
<feature type="transmembrane region" description="Helical" evidence="1">
    <location>
        <begin position="63"/>
        <end position="83"/>
    </location>
</feature>
<feature type="transmembrane region" description="Helical" evidence="1">
    <location>
        <begin position="95"/>
        <end position="115"/>
    </location>
</feature>
<name>YWLA_BACSU</name>
<sequence>MKYNYTVLLSAFTMSVLYSVIYIHSFIIAALITMAFYFLFPYLIFALPLQIMMNKKPKRFSPLYLLYYLAAAFIANAIIFGMLQPSGQSLFQNTAFYLFAVLTALIYWIWDSVLLQKKEA</sequence>
<gene>
    <name type="primary">ywlA</name>
    <name type="ordered locus">BSU36980</name>
    <name type="ORF">ipc-26r</name>
</gene>
<organism>
    <name type="scientific">Bacillus subtilis (strain 168)</name>
    <dbReference type="NCBI Taxonomy" id="224308"/>
    <lineage>
        <taxon>Bacteria</taxon>
        <taxon>Bacillati</taxon>
        <taxon>Bacillota</taxon>
        <taxon>Bacilli</taxon>
        <taxon>Bacillales</taxon>
        <taxon>Bacillaceae</taxon>
        <taxon>Bacillus</taxon>
    </lineage>
</organism>
<reference key="1">
    <citation type="submission" date="1994-10" db="EMBL/GenBank/DDBJ databases">
        <authorList>
            <person name="Glaser P."/>
            <person name="Danchin A."/>
        </authorList>
    </citation>
    <scope>NUCLEOTIDE SEQUENCE [GENOMIC DNA]</scope>
    <source>
        <strain>168</strain>
    </source>
</reference>
<reference key="2">
    <citation type="journal article" date="1997" name="Nature">
        <title>The complete genome sequence of the Gram-positive bacterium Bacillus subtilis.</title>
        <authorList>
            <person name="Kunst F."/>
            <person name="Ogasawara N."/>
            <person name="Moszer I."/>
            <person name="Albertini A.M."/>
            <person name="Alloni G."/>
            <person name="Azevedo V."/>
            <person name="Bertero M.G."/>
            <person name="Bessieres P."/>
            <person name="Bolotin A."/>
            <person name="Borchert S."/>
            <person name="Borriss R."/>
            <person name="Boursier L."/>
            <person name="Brans A."/>
            <person name="Braun M."/>
            <person name="Brignell S.C."/>
            <person name="Bron S."/>
            <person name="Brouillet S."/>
            <person name="Bruschi C.V."/>
            <person name="Caldwell B."/>
            <person name="Capuano V."/>
            <person name="Carter N.M."/>
            <person name="Choi S.-K."/>
            <person name="Codani J.-J."/>
            <person name="Connerton I.F."/>
            <person name="Cummings N.J."/>
            <person name="Daniel R.A."/>
            <person name="Denizot F."/>
            <person name="Devine K.M."/>
            <person name="Duesterhoeft A."/>
            <person name="Ehrlich S.D."/>
            <person name="Emmerson P.T."/>
            <person name="Entian K.-D."/>
            <person name="Errington J."/>
            <person name="Fabret C."/>
            <person name="Ferrari E."/>
            <person name="Foulger D."/>
            <person name="Fritz C."/>
            <person name="Fujita M."/>
            <person name="Fujita Y."/>
            <person name="Fuma S."/>
            <person name="Galizzi A."/>
            <person name="Galleron N."/>
            <person name="Ghim S.-Y."/>
            <person name="Glaser P."/>
            <person name="Goffeau A."/>
            <person name="Golightly E.J."/>
            <person name="Grandi G."/>
            <person name="Guiseppi G."/>
            <person name="Guy B.J."/>
            <person name="Haga K."/>
            <person name="Haiech J."/>
            <person name="Harwood C.R."/>
            <person name="Henaut A."/>
            <person name="Hilbert H."/>
            <person name="Holsappel S."/>
            <person name="Hosono S."/>
            <person name="Hullo M.-F."/>
            <person name="Itaya M."/>
            <person name="Jones L.-M."/>
            <person name="Joris B."/>
            <person name="Karamata D."/>
            <person name="Kasahara Y."/>
            <person name="Klaerr-Blanchard M."/>
            <person name="Klein C."/>
            <person name="Kobayashi Y."/>
            <person name="Koetter P."/>
            <person name="Koningstein G."/>
            <person name="Krogh S."/>
            <person name="Kumano M."/>
            <person name="Kurita K."/>
            <person name="Lapidus A."/>
            <person name="Lardinois S."/>
            <person name="Lauber J."/>
            <person name="Lazarevic V."/>
            <person name="Lee S.-M."/>
            <person name="Levine A."/>
            <person name="Liu H."/>
            <person name="Masuda S."/>
            <person name="Mauel C."/>
            <person name="Medigue C."/>
            <person name="Medina N."/>
            <person name="Mellado R.P."/>
            <person name="Mizuno M."/>
            <person name="Moestl D."/>
            <person name="Nakai S."/>
            <person name="Noback M."/>
            <person name="Noone D."/>
            <person name="O'Reilly M."/>
            <person name="Ogawa K."/>
            <person name="Ogiwara A."/>
            <person name="Oudega B."/>
            <person name="Park S.-H."/>
            <person name="Parro V."/>
            <person name="Pohl T.M."/>
            <person name="Portetelle D."/>
            <person name="Porwollik S."/>
            <person name="Prescott A.M."/>
            <person name="Presecan E."/>
            <person name="Pujic P."/>
            <person name="Purnelle B."/>
            <person name="Rapoport G."/>
            <person name="Rey M."/>
            <person name="Reynolds S."/>
            <person name="Rieger M."/>
            <person name="Rivolta C."/>
            <person name="Rocha E."/>
            <person name="Roche B."/>
            <person name="Rose M."/>
            <person name="Sadaie Y."/>
            <person name="Sato T."/>
            <person name="Scanlan E."/>
            <person name="Schleich S."/>
            <person name="Schroeter R."/>
            <person name="Scoffone F."/>
            <person name="Sekiguchi J."/>
            <person name="Sekowska A."/>
            <person name="Seror S.J."/>
            <person name="Serror P."/>
            <person name="Shin B.-S."/>
            <person name="Soldo B."/>
            <person name="Sorokin A."/>
            <person name="Tacconi E."/>
            <person name="Takagi T."/>
            <person name="Takahashi H."/>
            <person name="Takemaru K."/>
            <person name="Takeuchi M."/>
            <person name="Tamakoshi A."/>
            <person name="Tanaka T."/>
            <person name="Terpstra P."/>
            <person name="Tognoni A."/>
            <person name="Tosato V."/>
            <person name="Uchiyama S."/>
            <person name="Vandenbol M."/>
            <person name="Vannier F."/>
            <person name="Vassarotti A."/>
            <person name="Viari A."/>
            <person name="Wambutt R."/>
            <person name="Wedler E."/>
            <person name="Wedler H."/>
            <person name="Weitzenegger T."/>
            <person name="Winters P."/>
            <person name="Wipat A."/>
            <person name="Yamamoto H."/>
            <person name="Yamane K."/>
            <person name="Yasumoto K."/>
            <person name="Yata K."/>
            <person name="Yoshida K."/>
            <person name="Yoshikawa H.-F."/>
            <person name="Zumstein E."/>
            <person name="Yoshikawa H."/>
            <person name="Danchin A."/>
        </authorList>
    </citation>
    <scope>NUCLEOTIDE SEQUENCE [LARGE SCALE GENOMIC DNA]</scope>
    <source>
        <strain>168</strain>
    </source>
</reference>